<feature type="chain" id="PRO_0000331313" description="Zinc finger CCCH domain-containing protein 14">
    <location>
        <begin position="1"/>
        <end position="735"/>
    </location>
</feature>
<feature type="zinc finger region" description="C3H1-type 1" evidence="2">
    <location>
        <begin position="595"/>
        <end position="620"/>
    </location>
</feature>
<feature type="zinc finger region" description="C3H1-type 2" evidence="2">
    <location>
        <begin position="621"/>
        <end position="640"/>
    </location>
</feature>
<feature type="zinc finger region" description="C3H1-type 3" evidence="2">
    <location>
        <begin position="641"/>
        <end position="656"/>
    </location>
</feature>
<feature type="zinc finger region" description="C3H1-type 4" evidence="2">
    <location>
        <begin position="681"/>
        <end position="698"/>
    </location>
</feature>
<feature type="zinc finger region" description="C3H1-type 5" evidence="2">
    <location>
        <begin position="700"/>
        <end position="718"/>
    </location>
</feature>
<feature type="region of interest" description="Disordered" evidence="3">
    <location>
        <begin position="78"/>
        <end position="153"/>
    </location>
</feature>
<feature type="region of interest" description="Disordered" evidence="3">
    <location>
        <begin position="308"/>
        <end position="351"/>
    </location>
</feature>
<feature type="region of interest" description="Disordered" evidence="3">
    <location>
        <begin position="399"/>
        <end position="431"/>
    </location>
</feature>
<feature type="compositionally biased region" description="Polar residues" evidence="3">
    <location>
        <begin position="131"/>
        <end position="144"/>
    </location>
</feature>
<feature type="compositionally biased region" description="Basic and acidic residues" evidence="3">
    <location>
        <begin position="412"/>
        <end position="421"/>
    </location>
</feature>
<feature type="compositionally biased region" description="Polar residues" evidence="3">
    <location>
        <begin position="422"/>
        <end position="431"/>
    </location>
</feature>
<feature type="modified residue" description="N-acetylmethionine" evidence="1">
    <location>
        <position position="1"/>
    </location>
</feature>
<feature type="modified residue" description="Phosphoserine" evidence="14">
    <location>
        <position position="85"/>
    </location>
</feature>
<feature type="modified residue" description="Phosphoserine" evidence="1">
    <location>
        <position position="240"/>
    </location>
</feature>
<feature type="modified residue" description="Phosphoserine" evidence="13">
    <location>
        <position position="309"/>
    </location>
</feature>
<feature type="modified residue" description="Phosphoserine" evidence="1">
    <location>
        <position position="327"/>
    </location>
</feature>
<feature type="modified residue" description="Phosphoserine" evidence="1">
    <location>
        <position position="343"/>
    </location>
</feature>
<feature type="modified residue" description="N6-acetyllysine; alternate" evidence="1">
    <location>
        <position position="357"/>
    </location>
</feature>
<feature type="modified residue" description="Phosphoserine" evidence="1">
    <location>
        <position position="390"/>
    </location>
</feature>
<feature type="modified residue" description="Phosphoserine" evidence="1">
    <location>
        <position position="409"/>
    </location>
</feature>
<feature type="modified residue" description="Phosphoserine" evidence="1">
    <location>
        <position position="498"/>
    </location>
</feature>
<feature type="modified residue" description="Phosphoserine" evidence="14">
    <location>
        <position position="515"/>
    </location>
</feature>
<feature type="modified residue" description="Phosphoserine" evidence="14">
    <location>
        <position position="527"/>
    </location>
</feature>
<feature type="modified residue" description="Phosphoserine" evidence="1">
    <location>
        <position position="620"/>
    </location>
</feature>
<feature type="cross-link" description="Glycyl lysine isopeptide (Lys-Gly) (interchain with G-Cter in SUMO2)" evidence="1">
    <location>
        <position position="99"/>
    </location>
</feature>
<feature type="cross-link" description="Glycyl lysine isopeptide (Lys-Gly) (interchain with G-Cter in SUMO2)" evidence="1">
    <location>
        <position position="139"/>
    </location>
</feature>
<feature type="cross-link" description="Glycyl lysine isopeptide (Lys-Gly) (interchain with G-Cter in SUMO2)" evidence="1">
    <location>
        <position position="175"/>
    </location>
</feature>
<feature type="cross-link" description="Glycyl lysine isopeptide (Lys-Gly) (interchain with G-Cter in SUMO2)" evidence="1">
    <location>
        <position position="198"/>
    </location>
</feature>
<feature type="cross-link" description="Glycyl lysine isopeptide (Lys-Gly) (interchain with G-Cter in SUMO2)" evidence="1">
    <location>
        <position position="245"/>
    </location>
</feature>
<feature type="cross-link" description="Glycyl lysine isopeptide (Lys-Gly) (interchain with G-Cter in SUMO2)" evidence="1">
    <location>
        <position position="283"/>
    </location>
</feature>
<feature type="cross-link" description="Glycyl lysine isopeptide (Lys-Gly) (interchain with G-Cter in SUMO2)" evidence="1">
    <location>
        <position position="295"/>
    </location>
</feature>
<feature type="cross-link" description="Glycyl lysine isopeptide (Lys-Gly) (interchain with G-Cter in SUMO2); alternate" evidence="1">
    <location>
        <position position="357"/>
    </location>
</feature>
<feature type="cross-link" description="Glycyl lysine isopeptide (Lys-Gly) (interchain with G-Cter in SUMO2)" evidence="1">
    <location>
        <position position="378"/>
    </location>
</feature>
<feature type="cross-link" description="Glycyl lysine isopeptide (Lys-Gly) (interchain with G-Cter in SUMO2)" evidence="1">
    <location>
        <position position="413"/>
    </location>
</feature>
<feature type="cross-link" description="Glycyl lysine isopeptide (Lys-Gly) (interchain with G-Cter in SUMO2)" evidence="1">
    <location>
        <position position="489"/>
    </location>
</feature>
<feature type="splice variant" id="VSP_033177" description="In isoform 4." evidence="9">
    <location>
        <begin position="1"/>
        <end position="295"/>
    </location>
</feature>
<feature type="splice variant" id="VSP_033178" description="In isoform 4." evidence="9">
    <original>LPVVSSVVKVKRFSHDGEEEEEDEDYGTRIGSLSSSVSVPAKPERRPSLPPSKQANKNLILKAISEAQESVTKTTNYSAVPQKQTLPVAPRTRTSQEELLAEMVQGQNRAPRISPPVKEEEAKGDNTGKSQ</original>
    <variation>MKMSSRFSSPSLPVFLSPEPADLGSLTSASCSLNELGNISYLLRKIATDINEMKGMKAAILTVEANLFDLNVRVSQNEAKISSLEVKMNEYLTSTSECNRQLEDFQERLEFESQSETTDANLIGFLTEVEK</variation>
    <location>
        <begin position="296"/>
        <end position="426"/>
    </location>
</feature>
<feature type="splice variant" id="VSP_033179" description="In isoform 2." evidence="8 9">
    <location>
        <begin position="427"/>
        <end position="582"/>
    </location>
</feature>
<feature type="splice variant" id="VSP_033180" description="In isoform 3 and isoform 4." evidence="8 9">
    <location>
        <begin position="452"/>
        <end position="582"/>
    </location>
</feature>
<feature type="sequence conflict" description="In Ref. 1; BAC34134." evidence="11" ref="1">
    <original>D</original>
    <variation>H</variation>
    <location>
        <position position="27"/>
    </location>
</feature>
<feature type="sequence conflict" description="In Ref. 1; BAE36101." evidence="11" ref="1">
    <original>T</original>
    <variation>A</variation>
    <location>
        <position position="665"/>
    </location>
</feature>
<comment type="function">
    <text evidence="1 6 7">RNA-binding protein involved in the biogenesis of circular RNAs (circRNAs), which are produced by back-splicing circularization of pre-mRNAs (PubMed:39461343). Acts by binding to both exon-intron boundary and 3'-UTR of pre-mRNAs to promote circRNA biogenesis through dimerization and the association with the spliceosome (By similarity). Required for spermatogenesis via involvement in circRNA biogenesis (PubMed:39461343). Regulates the pre-mRNA processing of ATP5MC1; preventing its degradation (By similarity). Also binds the poly(A) tail of mRNAs; controlling poly(A) length in neuronal cells (PubMed:28666327).</text>
</comment>
<comment type="subunit">
    <text evidence="1">Homodimer; facilitating circular RNAs (circRNAs) formation (By similarity). Associates with the spliceosome (By similarity). Interacts with HOOK2 (By similarity). Interacts with ZFC3H1 in a RNase-sensitive manner (By similarity).</text>
</comment>
<comment type="subcellular location">
    <subcellularLocation>
        <location evidence="4 5">Nucleus speckle</location>
    </subcellularLocation>
    <text evidence="5">Colocalizes with poly(A) RNA in nuclear speckles.</text>
</comment>
<comment type="alternative products">
    <event type="alternative splicing"/>
    <isoform>
        <id>Q8BJ05-1</id>
        <name>1</name>
        <sequence type="displayed"/>
    </isoform>
    <isoform>
        <id>Q8BJ05-2</id>
        <name>2</name>
        <sequence type="described" ref="VSP_033179"/>
    </isoform>
    <isoform>
        <id>Q8BJ05-3</id>
        <name>3</name>
        <sequence type="described" ref="VSP_033180"/>
    </isoform>
    <isoform>
        <id>Q8BJ05-4</id>
        <name>4</name>
        <sequence type="described" ref="VSP_033177 VSP_033178 VSP_033180"/>
    </isoform>
</comment>
<comment type="tissue specificity">
    <text evidence="5">Expressed in hippocampal pyramidal neurons (at protein level) (PubMed:21734151). Expressed in kidney, liver, muscle, heart brain and testes (PubMed:19303045). Expressed in hippocampal pyramidal neurons (PubMed:21734151).</text>
</comment>
<comment type="disruption phenotype">
    <text evidence="6 7">Defects in spermatogenesis and reduced testicular circular RNAs (circRNAs) levels (PubMed:39461343). Mice also show enlarged lateral ventricles in the brain as well as impaired working memory (PubMed:28666327).</text>
</comment>
<comment type="similarity">
    <text evidence="11">Belongs to the ZC3H14 family.</text>
</comment>
<accession>Q8BJ05</accession>
<accession>A0PJE7</accession>
<accession>A1A4A9</accession>
<accession>Q3TU70</accession>
<accession>Q8BIY8</accession>
<accession>Q8R3Q8</accession>
<accession>Q8R3R2</accession>
<accession>Q9DAA8</accession>
<gene>
    <name evidence="10 12" type="primary">Zc3h14</name>
</gene>
<proteinExistence type="evidence at protein level"/>
<name>ZC3HE_MOUSE</name>
<protein>
    <recommendedName>
        <fullName evidence="11">Zinc finger CCCH domain-containing protein 14</fullName>
    </recommendedName>
</protein>
<keyword id="KW-0007">Acetylation</keyword>
<keyword id="KW-0025">Alternative splicing</keyword>
<keyword id="KW-0221">Differentiation</keyword>
<keyword id="KW-1017">Isopeptide bond</keyword>
<keyword id="KW-0479">Metal-binding</keyword>
<keyword id="KW-0539">Nucleus</keyword>
<keyword id="KW-0597">Phosphoprotein</keyword>
<keyword id="KW-1185">Reference proteome</keyword>
<keyword id="KW-0677">Repeat</keyword>
<keyword id="KW-0694">RNA-binding</keyword>
<keyword id="KW-0744">Spermatogenesis</keyword>
<keyword id="KW-0832">Ubl conjugation</keyword>
<keyword id="KW-0862">Zinc</keyword>
<keyword id="KW-0863">Zinc-finger</keyword>
<dbReference type="EMBL" id="AK006009">
    <property type="protein sequence ID" value="BAB24364.1"/>
    <property type="molecule type" value="mRNA"/>
</dbReference>
<dbReference type="EMBL" id="AK048046">
    <property type="protein sequence ID" value="BAC33222.1"/>
    <property type="molecule type" value="mRNA"/>
</dbReference>
<dbReference type="EMBL" id="AK050226">
    <property type="protein sequence ID" value="BAC34134.1"/>
    <property type="molecule type" value="mRNA"/>
</dbReference>
<dbReference type="EMBL" id="AK160937">
    <property type="protein sequence ID" value="BAE36101.1"/>
    <property type="molecule type" value="mRNA"/>
</dbReference>
<dbReference type="EMBL" id="BC021797">
    <property type="protein sequence ID" value="AAH21797.1"/>
    <property type="molecule type" value="mRNA"/>
</dbReference>
<dbReference type="EMBL" id="BC024824">
    <property type="protein sequence ID" value="AAH24824.1"/>
    <property type="molecule type" value="mRNA"/>
</dbReference>
<dbReference type="EMBL" id="BC024856">
    <property type="protein sequence ID" value="AAH24856.1"/>
    <property type="molecule type" value="mRNA"/>
</dbReference>
<dbReference type="EMBL" id="BC026610">
    <property type="protein sequence ID" value="AAH26610.1"/>
    <property type="molecule type" value="mRNA"/>
</dbReference>
<dbReference type="CCDS" id="CCDS26099.1">
    <molecule id="Q8BJ05-3"/>
</dbReference>
<dbReference type="CCDS" id="CCDS26100.1">
    <molecule id="Q8BJ05-1"/>
</dbReference>
<dbReference type="CCDS" id="CCDS49138.1">
    <molecule id="Q8BJ05-2"/>
</dbReference>
<dbReference type="CCDS" id="CCDS49139.1">
    <molecule id="Q8BJ05-4"/>
</dbReference>
<dbReference type="RefSeq" id="NP_001008506.2">
    <molecule id="Q8BJ05-3"/>
    <property type="nucleotide sequence ID" value="NM_001008506.2"/>
</dbReference>
<dbReference type="RefSeq" id="NP_001153579.1">
    <molecule id="Q8BJ05-2"/>
    <property type="nucleotide sequence ID" value="NM_001160107.1"/>
</dbReference>
<dbReference type="RefSeq" id="NP_001153580.1">
    <molecule id="Q8BJ05-4"/>
    <property type="nucleotide sequence ID" value="NM_001160108.1"/>
</dbReference>
<dbReference type="RefSeq" id="NP_083610.2">
    <molecule id="Q8BJ05-1"/>
    <property type="nucleotide sequence ID" value="NM_029334.2"/>
</dbReference>
<dbReference type="BioGRID" id="217572">
    <property type="interactions" value="3"/>
</dbReference>
<dbReference type="FunCoup" id="Q8BJ05">
    <property type="interactions" value="3682"/>
</dbReference>
<dbReference type="STRING" id="10090.ENSMUSP00000105732"/>
<dbReference type="GlyGen" id="Q8BJ05">
    <property type="glycosylation" value="8 sites, 1 O-linked glycan (8 sites)"/>
</dbReference>
<dbReference type="iPTMnet" id="Q8BJ05"/>
<dbReference type="PhosphoSitePlus" id="Q8BJ05"/>
<dbReference type="SwissPalm" id="Q8BJ05"/>
<dbReference type="jPOST" id="Q8BJ05"/>
<dbReference type="PaxDb" id="10090-ENSMUSP00000105732"/>
<dbReference type="PeptideAtlas" id="Q8BJ05"/>
<dbReference type="ProteomicsDB" id="302046">
    <molecule id="Q8BJ05-1"/>
</dbReference>
<dbReference type="ProteomicsDB" id="302047">
    <molecule id="Q8BJ05-2"/>
</dbReference>
<dbReference type="ProteomicsDB" id="302048">
    <molecule id="Q8BJ05-3"/>
</dbReference>
<dbReference type="ProteomicsDB" id="302049">
    <molecule id="Q8BJ05-4"/>
</dbReference>
<dbReference type="Pumba" id="Q8BJ05"/>
<dbReference type="Antibodypedia" id="26309">
    <property type="antibodies" value="140 antibodies from 24 providers"/>
</dbReference>
<dbReference type="DNASU" id="75553"/>
<dbReference type="Ensembl" id="ENSMUST00000021399.9">
    <molecule id="Q8BJ05-4"/>
    <property type="protein sequence ID" value="ENSMUSP00000021399.8"/>
    <property type="gene ID" value="ENSMUSG00000021012.17"/>
</dbReference>
<dbReference type="Ensembl" id="ENSMUST00000057000.17">
    <molecule id="Q8BJ05-2"/>
    <property type="protein sequence ID" value="ENSMUSP00000055879.10"/>
    <property type="gene ID" value="ENSMUSG00000021012.17"/>
</dbReference>
<dbReference type="Ensembl" id="ENSMUST00000110104.10">
    <molecule id="Q8BJ05-3"/>
    <property type="protein sequence ID" value="ENSMUSP00000105731.3"/>
    <property type="gene ID" value="ENSMUSG00000021012.17"/>
</dbReference>
<dbReference type="Ensembl" id="ENSMUST00000110105.10">
    <molecule id="Q8BJ05-1"/>
    <property type="protein sequence ID" value="ENSMUSP00000105732.3"/>
    <property type="gene ID" value="ENSMUSG00000021012.17"/>
</dbReference>
<dbReference type="GeneID" id="75553"/>
<dbReference type="KEGG" id="mmu:75553"/>
<dbReference type="UCSC" id="uc007org.1">
    <molecule id="Q8BJ05-1"/>
    <property type="organism name" value="mouse"/>
</dbReference>
<dbReference type="UCSC" id="uc007orh.1">
    <molecule id="Q8BJ05-3"/>
    <property type="organism name" value="mouse"/>
</dbReference>
<dbReference type="UCSC" id="uc007ori.1">
    <molecule id="Q8BJ05-2"/>
    <property type="organism name" value="mouse"/>
</dbReference>
<dbReference type="UCSC" id="uc007orl.2">
    <molecule id="Q8BJ05-4"/>
    <property type="organism name" value="mouse"/>
</dbReference>
<dbReference type="AGR" id="MGI:1919824"/>
<dbReference type="CTD" id="79882"/>
<dbReference type="MGI" id="MGI:1919824">
    <property type="gene designation" value="Zc3h14"/>
</dbReference>
<dbReference type="VEuPathDB" id="HostDB:ENSMUSG00000021012"/>
<dbReference type="eggNOG" id="KOG3702">
    <property type="taxonomic scope" value="Eukaryota"/>
</dbReference>
<dbReference type="GeneTree" id="ENSGT00440000038430"/>
<dbReference type="HOGENOM" id="CLU_022605_0_0_1"/>
<dbReference type="InParanoid" id="Q8BJ05"/>
<dbReference type="OMA" id="CPYTHVS"/>
<dbReference type="OrthoDB" id="5589010at2759"/>
<dbReference type="PhylomeDB" id="Q8BJ05"/>
<dbReference type="TreeFam" id="TF329509"/>
<dbReference type="BioGRID-ORCS" id="75553">
    <property type="hits" value="6 hits in 74 CRISPR screens"/>
</dbReference>
<dbReference type="ChiTaRS" id="Zc3h14">
    <property type="organism name" value="mouse"/>
</dbReference>
<dbReference type="PRO" id="PR:Q8BJ05"/>
<dbReference type="Proteomes" id="UP000000589">
    <property type="component" value="Chromosome 12"/>
</dbReference>
<dbReference type="RNAct" id="Q8BJ05">
    <property type="molecule type" value="protein"/>
</dbReference>
<dbReference type="Bgee" id="ENSMUSG00000021012">
    <property type="expression patterns" value="Expressed in spermatocyte and 258 other cell types or tissues"/>
</dbReference>
<dbReference type="ExpressionAtlas" id="Q8BJ05">
    <property type="expression patterns" value="baseline and differential"/>
</dbReference>
<dbReference type="GO" id="GO:1904115">
    <property type="term" value="C:axon cytoplasm"/>
    <property type="evidence" value="ECO:0007669"/>
    <property type="project" value="Ensembl"/>
</dbReference>
<dbReference type="GO" id="GO:0032839">
    <property type="term" value="C:dendrite cytoplasm"/>
    <property type="evidence" value="ECO:0007669"/>
    <property type="project" value="Ensembl"/>
</dbReference>
<dbReference type="GO" id="GO:0016607">
    <property type="term" value="C:nuclear speck"/>
    <property type="evidence" value="ECO:0000314"/>
    <property type="project" value="UniProtKB"/>
</dbReference>
<dbReference type="GO" id="GO:0005730">
    <property type="term" value="C:nucleolus"/>
    <property type="evidence" value="ECO:0007669"/>
    <property type="project" value="Ensembl"/>
</dbReference>
<dbReference type="GO" id="GO:0005634">
    <property type="term" value="C:nucleus"/>
    <property type="evidence" value="ECO:0000250"/>
    <property type="project" value="UniProtKB"/>
</dbReference>
<dbReference type="GO" id="GO:1990904">
    <property type="term" value="C:ribonucleoprotein complex"/>
    <property type="evidence" value="ECO:0007669"/>
    <property type="project" value="Ensembl"/>
</dbReference>
<dbReference type="GO" id="GO:0003730">
    <property type="term" value="F:mRNA 3'-UTR binding"/>
    <property type="evidence" value="ECO:0007669"/>
    <property type="project" value="Ensembl"/>
</dbReference>
<dbReference type="GO" id="GO:0008143">
    <property type="term" value="F:poly(A) binding"/>
    <property type="evidence" value="ECO:0000314"/>
    <property type="project" value="UniProtKB"/>
</dbReference>
<dbReference type="GO" id="GO:0036002">
    <property type="term" value="F:pre-mRNA binding"/>
    <property type="evidence" value="ECO:0000250"/>
    <property type="project" value="UniProtKB"/>
</dbReference>
<dbReference type="GO" id="GO:0008270">
    <property type="term" value="F:zinc ion binding"/>
    <property type="evidence" value="ECO:0007669"/>
    <property type="project" value="UniProtKB-KW"/>
</dbReference>
<dbReference type="GO" id="GO:0048255">
    <property type="term" value="P:mRNA stabilization"/>
    <property type="evidence" value="ECO:0000250"/>
    <property type="project" value="UniProtKB"/>
</dbReference>
<dbReference type="GO" id="GO:0007283">
    <property type="term" value="P:spermatogenesis"/>
    <property type="evidence" value="ECO:0000315"/>
    <property type="project" value="UniProtKB"/>
</dbReference>
<dbReference type="GO" id="GO:0160091">
    <property type="term" value="P:spliceosome-depend formation of circular RNA"/>
    <property type="evidence" value="ECO:0000315"/>
    <property type="project" value="UniProtKB"/>
</dbReference>
<dbReference type="FunFam" id="4.10.1000.30:FF:000001">
    <property type="entry name" value="Zinc finger CCCH domain-containing protein 14"/>
    <property type="match status" value="1"/>
</dbReference>
<dbReference type="FunFam" id="4.10.1000.40:FF:000006">
    <property type="entry name" value="Zinc finger CCCH domain-containing protein 14"/>
    <property type="match status" value="1"/>
</dbReference>
<dbReference type="FunFam" id="1.20.1390.10:FF:000006">
    <property type="entry name" value="zinc finger CCCH domain-containing protein 14"/>
    <property type="match status" value="1"/>
</dbReference>
<dbReference type="FunFam" id="4.10.1000.40:FF:000001">
    <property type="entry name" value="zinc finger CCCH domain-containing protein 14 isoform X2"/>
    <property type="match status" value="1"/>
</dbReference>
<dbReference type="FunFam" id="4.10.1000.30:FF:000003">
    <property type="entry name" value="zinc finger CCCH domain-containing protein 14 isoform X6"/>
    <property type="match status" value="1"/>
</dbReference>
<dbReference type="Gene3D" id="4.10.1000.30">
    <property type="match status" value="1"/>
</dbReference>
<dbReference type="Gene3D" id="4.10.1000.40">
    <property type="match status" value="1"/>
</dbReference>
<dbReference type="Gene3D" id="1.20.1390.10">
    <property type="entry name" value="PWI domain"/>
    <property type="match status" value="1"/>
</dbReference>
<dbReference type="InterPro" id="IPR040366">
    <property type="entry name" value="Nab2/ZC3H14"/>
</dbReference>
<dbReference type="InterPro" id="IPR000571">
    <property type="entry name" value="Znf_CCCH"/>
</dbReference>
<dbReference type="PANTHER" id="PTHR14738">
    <property type="entry name" value="ZINC FINGER CCCH DOMAIN-CONTAINING PROTEIN 14"/>
    <property type="match status" value="1"/>
</dbReference>
<dbReference type="PANTHER" id="PTHR14738:SF29">
    <property type="entry name" value="ZINC FINGER CCCH DOMAIN-CONTAINING PROTEIN 14"/>
    <property type="match status" value="1"/>
</dbReference>
<dbReference type="Pfam" id="PF14608">
    <property type="entry name" value="zf-CCCH_2"/>
    <property type="match status" value="5"/>
</dbReference>
<dbReference type="SMART" id="SM00356">
    <property type="entry name" value="ZnF_C3H1"/>
    <property type="match status" value="3"/>
</dbReference>
<dbReference type="PROSITE" id="PS50103">
    <property type="entry name" value="ZF_C3H1"/>
    <property type="match status" value="3"/>
</dbReference>
<sequence length="735" mass="82409">MEIGTEISRKIRSAIKGKLQELGAYVDEELPDYIMVMVANKKSQDQMTEDLSLFLGNNTIRFTVWLHGVLDKLRSVTTEPSSLKSPDASIFDSHVPSNKSSFSRGDERRHEAAVPPLAVSSSRPEKRDSRVSTSSQEQKSTNVRHSYDDGASTRLMSTVKPLREPAPSEDVIDIKPEPDDLIDEDLNFVQENPLSQKKPTVTLTYGSSRPSIEIYRPPASRNADTGTHLNRLQLHPQQSSAHAAKQLDVQSSQVSEAGRLCEPPVLSSVEDTYSPFFRNNLDKMSIEDENFRKRKLPVVSSVVKVKRFSHDGEEEEEDEDYGTRIGSLSSSVSVPAKPERRPSLPPSKQANKNLILKAISEAQESVTKTTNYSAVPQKQTLPVAPRTRTSQEELLAEMVQGQNRAPRISPPVKEEEAKGDNTGKSQGTQQRQLLSRLQIDPVMVETMEMSQDYYDMESMVHADTRSFILKKPKLSEEIVVTPNQDSGMKTADALRVLSGHLMQTRDLVQPDKPASPKFIVTLDGVPSPPGYMSDQEEEMCFEGMKPVNQTSASNKGLRGLLHPQQLHLLSRQLEDPDGSFSNAEMTDLSVAQKPEKLLERCKYWPACKNGDECVYHHPISPCKAFPNCKFAEKCLFVHPNCKYDTKCTKADCPFTHMSRRASILTPKPVSSPAPSSNGQLCRYFPACKKMECPFYHPKHCRFNTQCTRPDCTFYHPTITVPPRHALKWIRPQSSE</sequence>
<organism>
    <name type="scientific">Mus musculus</name>
    <name type="common">Mouse</name>
    <dbReference type="NCBI Taxonomy" id="10090"/>
    <lineage>
        <taxon>Eukaryota</taxon>
        <taxon>Metazoa</taxon>
        <taxon>Chordata</taxon>
        <taxon>Craniata</taxon>
        <taxon>Vertebrata</taxon>
        <taxon>Euteleostomi</taxon>
        <taxon>Mammalia</taxon>
        <taxon>Eutheria</taxon>
        <taxon>Euarchontoglires</taxon>
        <taxon>Glires</taxon>
        <taxon>Rodentia</taxon>
        <taxon>Myomorpha</taxon>
        <taxon>Muroidea</taxon>
        <taxon>Muridae</taxon>
        <taxon>Murinae</taxon>
        <taxon>Mus</taxon>
        <taxon>Mus</taxon>
    </lineage>
</organism>
<evidence type="ECO:0000250" key="1">
    <source>
        <dbReference type="UniProtKB" id="Q6PJT7"/>
    </source>
</evidence>
<evidence type="ECO:0000255" key="2">
    <source>
        <dbReference type="PROSITE-ProRule" id="PRU00723"/>
    </source>
</evidence>
<evidence type="ECO:0000256" key="3">
    <source>
        <dbReference type="SAM" id="MobiDB-lite"/>
    </source>
</evidence>
<evidence type="ECO:0000269" key="4">
    <source>
    </source>
</evidence>
<evidence type="ECO:0000269" key="5">
    <source>
    </source>
</evidence>
<evidence type="ECO:0000269" key="6">
    <source>
    </source>
</evidence>
<evidence type="ECO:0000269" key="7">
    <source>
    </source>
</evidence>
<evidence type="ECO:0000303" key="8">
    <source>
    </source>
</evidence>
<evidence type="ECO:0000303" key="9">
    <source>
    </source>
</evidence>
<evidence type="ECO:0000303" key="10">
    <source>
    </source>
</evidence>
<evidence type="ECO:0000305" key="11"/>
<evidence type="ECO:0000312" key="12">
    <source>
        <dbReference type="MGI" id="MGI:1919824"/>
    </source>
</evidence>
<evidence type="ECO:0007744" key="13">
    <source>
    </source>
</evidence>
<evidence type="ECO:0007744" key="14">
    <source>
    </source>
</evidence>
<reference key="1">
    <citation type="journal article" date="2005" name="Science">
        <title>The transcriptional landscape of the mammalian genome.</title>
        <authorList>
            <person name="Carninci P."/>
            <person name="Kasukawa T."/>
            <person name="Katayama S."/>
            <person name="Gough J."/>
            <person name="Frith M.C."/>
            <person name="Maeda N."/>
            <person name="Oyama R."/>
            <person name="Ravasi T."/>
            <person name="Lenhard B."/>
            <person name="Wells C."/>
            <person name="Kodzius R."/>
            <person name="Shimokawa K."/>
            <person name="Bajic V.B."/>
            <person name="Brenner S.E."/>
            <person name="Batalov S."/>
            <person name="Forrest A.R."/>
            <person name="Zavolan M."/>
            <person name="Davis M.J."/>
            <person name="Wilming L.G."/>
            <person name="Aidinis V."/>
            <person name="Allen J.E."/>
            <person name="Ambesi-Impiombato A."/>
            <person name="Apweiler R."/>
            <person name="Aturaliya R.N."/>
            <person name="Bailey T.L."/>
            <person name="Bansal M."/>
            <person name="Baxter L."/>
            <person name="Beisel K.W."/>
            <person name="Bersano T."/>
            <person name="Bono H."/>
            <person name="Chalk A.M."/>
            <person name="Chiu K.P."/>
            <person name="Choudhary V."/>
            <person name="Christoffels A."/>
            <person name="Clutterbuck D.R."/>
            <person name="Crowe M.L."/>
            <person name="Dalla E."/>
            <person name="Dalrymple B.P."/>
            <person name="de Bono B."/>
            <person name="Della Gatta G."/>
            <person name="di Bernardo D."/>
            <person name="Down T."/>
            <person name="Engstrom P."/>
            <person name="Fagiolini M."/>
            <person name="Faulkner G."/>
            <person name="Fletcher C.F."/>
            <person name="Fukushima T."/>
            <person name="Furuno M."/>
            <person name="Futaki S."/>
            <person name="Gariboldi M."/>
            <person name="Georgii-Hemming P."/>
            <person name="Gingeras T.R."/>
            <person name="Gojobori T."/>
            <person name="Green R.E."/>
            <person name="Gustincich S."/>
            <person name="Harbers M."/>
            <person name="Hayashi Y."/>
            <person name="Hensch T.K."/>
            <person name="Hirokawa N."/>
            <person name="Hill D."/>
            <person name="Huminiecki L."/>
            <person name="Iacono M."/>
            <person name="Ikeo K."/>
            <person name="Iwama A."/>
            <person name="Ishikawa T."/>
            <person name="Jakt M."/>
            <person name="Kanapin A."/>
            <person name="Katoh M."/>
            <person name="Kawasawa Y."/>
            <person name="Kelso J."/>
            <person name="Kitamura H."/>
            <person name="Kitano H."/>
            <person name="Kollias G."/>
            <person name="Krishnan S.P."/>
            <person name="Kruger A."/>
            <person name="Kummerfeld S.K."/>
            <person name="Kurochkin I.V."/>
            <person name="Lareau L.F."/>
            <person name="Lazarevic D."/>
            <person name="Lipovich L."/>
            <person name="Liu J."/>
            <person name="Liuni S."/>
            <person name="McWilliam S."/>
            <person name="Madan Babu M."/>
            <person name="Madera M."/>
            <person name="Marchionni L."/>
            <person name="Matsuda H."/>
            <person name="Matsuzawa S."/>
            <person name="Miki H."/>
            <person name="Mignone F."/>
            <person name="Miyake S."/>
            <person name="Morris K."/>
            <person name="Mottagui-Tabar S."/>
            <person name="Mulder N."/>
            <person name="Nakano N."/>
            <person name="Nakauchi H."/>
            <person name="Ng P."/>
            <person name="Nilsson R."/>
            <person name="Nishiguchi S."/>
            <person name="Nishikawa S."/>
            <person name="Nori F."/>
            <person name="Ohara O."/>
            <person name="Okazaki Y."/>
            <person name="Orlando V."/>
            <person name="Pang K.C."/>
            <person name="Pavan W.J."/>
            <person name="Pavesi G."/>
            <person name="Pesole G."/>
            <person name="Petrovsky N."/>
            <person name="Piazza S."/>
            <person name="Reed J."/>
            <person name="Reid J.F."/>
            <person name="Ring B.Z."/>
            <person name="Ringwald M."/>
            <person name="Rost B."/>
            <person name="Ruan Y."/>
            <person name="Salzberg S.L."/>
            <person name="Sandelin A."/>
            <person name="Schneider C."/>
            <person name="Schoenbach C."/>
            <person name="Sekiguchi K."/>
            <person name="Semple C.A."/>
            <person name="Seno S."/>
            <person name="Sessa L."/>
            <person name="Sheng Y."/>
            <person name="Shibata Y."/>
            <person name="Shimada H."/>
            <person name="Shimada K."/>
            <person name="Silva D."/>
            <person name="Sinclair B."/>
            <person name="Sperling S."/>
            <person name="Stupka E."/>
            <person name="Sugiura K."/>
            <person name="Sultana R."/>
            <person name="Takenaka Y."/>
            <person name="Taki K."/>
            <person name="Tammoja K."/>
            <person name="Tan S.L."/>
            <person name="Tang S."/>
            <person name="Taylor M.S."/>
            <person name="Tegner J."/>
            <person name="Teichmann S.A."/>
            <person name="Ueda H.R."/>
            <person name="van Nimwegen E."/>
            <person name="Verardo R."/>
            <person name="Wei C.L."/>
            <person name="Yagi K."/>
            <person name="Yamanishi H."/>
            <person name="Zabarovsky E."/>
            <person name="Zhu S."/>
            <person name="Zimmer A."/>
            <person name="Hide W."/>
            <person name="Bult C."/>
            <person name="Grimmond S.M."/>
            <person name="Teasdale R.D."/>
            <person name="Liu E.T."/>
            <person name="Brusic V."/>
            <person name="Quackenbush J."/>
            <person name="Wahlestedt C."/>
            <person name="Mattick J.S."/>
            <person name="Hume D.A."/>
            <person name="Kai C."/>
            <person name="Sasaki D."/>
            <person name="Tomaru Y."/>
            <person name="Fukuda S."/>
            <person name="Kanamori-Katayama M."/>
            <person name="Suzuki M."/>
            <person name="Aoki J."/>
            <person name="Arakawa T."/>
            <person name="Iida J."/>
            <person name="Imamura K."/>
            <person name="Itoh M."/>
            <person name="Kato T."/>
            <person name="Kawaji H."/>
            <person name="Kawagashira N."/>
            <person name="Kawashima T."/>
            <person name="Kojima M."/>
            <person name="Kondo S."/>
            <person name="Konno H."/>
            <person name="Nakano K."/>
            <person name="Ninomiya N."/>
            <person name="Nishio T."/>
            <person name="Okada M."/>
            <person name="Plessy C."/>
            <person name="Shibata K."/>
            <person name="Shiraki T."/>
            <person name="Suzuki S."/>
            <person name="Tagami M."/>
            <person name="Waki K."/>
            <person name="Watahiki A."/>
            <person name="Okamura-Oho Y."/>
            <person name="Suzuki H."/>
            <person name="Kawai J."/>
            <person name="Hayashizaki Y."/>
        </authorList>
    </citation>
    <scope>NUCLEOTIDE SEQUENCE [LARGE SCALE MRNA] (ISOFORMS 1; 2 AND 4)</scope>
    <source>
        <strain>C57BL/6J</strain>
        <tissue>Head</tissue>
        <tissue>Liver</tissue>
        <tissue>Testis</tissue>
    </source>
</reference>
<reference key="2">
    <citation type="journal article" date="2004" name="Genome Res.">
        <title>The status, quality, and expansion of the NIH full-length cDNA project: the Mammalian Gene Collection (MGC).</title>
        <authorList>
            <consortium name="The MGC Project Team"/>
        </authorList>
    </citation>
    <scope>NUCLEOTIDE SEQUENCE [LARGE SCALE MRNA] (ISOFORM 2)</scope>
    <scope>NUCLEOTIDE SEQUENCE [LARGE SCALE MRNA] OF 128-735 (ISOFORM 3)</scope>
    <source>
        <strain>FVB/N</strain>
        <tissue>Mammary tumor</tissue>
    </source>
</reference>
<reference key="3">
    <citation type="journal article" date="2007" name="Proc. Natl. Acad. Sci. U.S.A.">
        <title>Large-scale phosphorylation analysis of mouse liver.</title>
        <authorList>
            <person name="Villen J."/>
            <person name="Beausoleil S.A."/>
            <person name="Gerber S.A."/>
            <person name="Gygi S.P."/>
        </authorList>
    </citation>
    <scope>PHOSPHORYLATION [LARGE SCALE ANALYSIS] AT SER-309</scope>
    <scope>IDENTIFICATION BY MASS SPECTROMETRY [LARGE SCALE ANALYSIS]</scope>
    <source>
        <tissue>Liver</tissue>
    </source>
</reference>
<reference key="4">
    <citation type="journal article" date="2009" name="Gene">
        <title>Splice variants of the human ZC3H14 gene generate multiple isoforms of a zinc finger polyadenosine RNA binding protein.</title>
        <authorList>
            <person name="Leung S.W."/>
            <person name="Apponi L.H."/>
            <person name="Cornejo O.E."/>
            <person name="Kitchen C.M."/>
            <person name="Valentini S.R."/>
            <person name="Pavlath G.K."/>
            <person name="Dunham C.M."/>
            <person name="Corbett A.H."/>
        </authorList>
    </citation>
    <scope>TISSUE SPECIFICITY</scope>
    <scope>SUBCELLULAR LOCATION</scope>
</reference>
<reference key="5">
    <citation type="journal article" date="2010" name="Cell">
        <title>A tissue-specific atlas of mouse protein phosphorylation and expression.</title>
        <authorList>
            <person name="Huttlin E.L."/>
            <person name="Jedrychowski M.P."/>
            <person name="Elias J.E."/>
            <person name="Goswami T."/>
            <person name="Rad R."/>
            <person name="Beausoleil S.A."/>
            <person name="Villen J."/>
            <person name="Haas W."/>
            <person name="Sowa M.E."/>
            <person name="Gygi S.P."/>
        </authorList>
    </citation>
    <scope>PHOSPHORYLATION [LARGE SCALE ANALYSIS] AT SER-85; SER-515 AND SER-527</scope>
    <scope>IDENTIFICATION BY MASS SPECTROMETRY [LARGE SCALE ANALYSIS]</scope>
    <source>
        <tissue>Brain</tissue>
        <tissue>Heart</tissue>
        <tissue>Kidney</tissue>
        <tissue>Lung</tissue>
        <tissue>Spleen</tissue>
        <tissue>Testis</tissue>
    </source>
</reference>
<reference key="6">
    <citation type="journal article" date="2011" name="Proc. Natl. Acad. Sci. U.S.A.">
        <title>Mutation of the conserved polyadenosine RNA binding protein, ZC3H14/dNab2, impairs neural function in Drosophila and humans.</title>
        <authorList>
            <person name="Pak C."/>
            <person name="Garshasbi M."/>
            <person name="Kahrizi K."/>
            <person name="Gross C."/>
            <person name="Apponi L.H."/>
            <person name="Noto J.J."/>
            <person name="Kelly S.M."/>
            <person name="Leung S.W."/>
            <person name="Tzschach A."/>
            <person name="Behjati F."/>
            <person name="Abedini S.S."/>
            <person name="Mohseni M."/>
            <person name="Jensen L.R."/>
            <person name="Hu H."/>
            <person name="Huang B."/>
            <person name="Stahley S.N."/>
            <person name="Liu G."/>
            <person name="Williams K.R."/>
            <person name="Burdick S."/>
            <person name="Feng Y."/>
            <person name="Sanyal S."/>
            <person name="Bassell G.J."/>
            <person name="Ropers H.H."/>
            <person name="Najmabadi H."/>
            <person name="Corbett A.H."/>
            <person name="Moberg K.H."/>
            <person name="Kuss A.W."/>
        </authorList>
    </citation>
    <scope>SUBCELLULAR LOCATION</scope>
    <scope>TISSUE SPECIFICITY</scope>
</reference>
<reference key="7">
    <citation type="journal article" date="2017" name="Hum. Mol. Genet.">
        <title>The RNA-binding protein, ZC3H14, is required for proper poly(A) tail length control, expression of synaptic proteins, and brain function in mice.</title>
        <authorList>
            <person name="Rha J."/>
            <person name="Jones S.K."/>
            <person name="Fidler J."/>
            <person name="Banerjee A."/>
            <person name="Leung S.W."/>
            <person name="Morris K.J."/>
            <person name="Wong J.C."/>
            <person name="Inglis G.A.S."/>
            <person name="Shapiro L."/>
            <person name="Deng Q."/>
            <person name="Cutler A.A."/>
            <person name="Hanif A.M."/>
            <person name="Pardue M.T."/>
            <person name="Schaffer A."/>
            <person name="Seyfried N.T."/>
            <person name="Moberg K.H."/>
            <person name="Bassell G.J."/>
            <person name="Escayg A."/>
            <person name="Garcia P.S."/>
            <person name="Corbett A.H."/>
        </authorList>
    </citation>
    <scope>FUNCTION</scope>
    <scope>DISRUPTION PHENOTYPE</scope>
</reference>
<reference key="8">
    <citation type="journal article" date="2024" name="Mol. Cell">
        <title>ZC3H14 facilitates backsplicing by binding to exon-intron boundary and 3' UTR.</title>
        <authorList>
            <person name="Li Q."/>
            <person name="Yang G."/>
            <person name="Ren B."/>
            <person name="Liu X."/>
            <person name="Tang L.Q."/>
            <person name="Shi Q."/>
            <person name="Shan G."/>
            <person name="Wang X."/>
        </authorList>
    </citation>
    <scope>FUNCTION</scope>
    <scope>DISRUPTION PHENOTYPE</scope>
</reference>